<keyword id="KW-0325">Glycoprotein</keyword>
<keyword id="KW-0413">Isomerase</keyword>
<keyword id="KW-0470">Melanin biosynthesis</keyword>
<keyword id="KW-0472">Membrane</keyword>
<keyword id="KW-0479">Metal-binding</keyword>
<keyword id="KW-1185">Reference proteome</keyword>
<keyword id="KW-0732">Signal</keyword>
<keyword id="KW-0812">Transmembrane</keyword>
<keyword id="KW-1133">Transmembrane helix</keyword>
<keyword id="KW-0862">Zinc</keyword>
<sequence>MVPFRWGLLLGCLGSALGPGAQAQFPRVCMTVGSLQAKECCPPLGAEPSNVCGSLEGRGRCAEVQADTRPWSGPYVLRNQDDRERWPRKFFDRTCRCTGNFAGYNCGDCKFGWTGPNCDQKKPLVVRQNIHSLTAQEREQFLGALDLAKNTPHPDYVITTQHWLGLLGPNGTQPQIANCSIYDLFVWLHYYSVRDTLLGPGRPYKAIDFSHQGPAFVTWHRYHLLWLERALQRLTGNESFAVPYWNFATGRNECDVCTDQLLGAARPDDPTLISQNSRFSSWEIVCDSLDDYNRRVTLCNGTYEGLLRRNQVGRNSEKLPSLKDIEDCLSLKQFDNPPFFQNSTFSFRNALEGFDKADGTLDSQVMSLHNLVHSFLNGTSALPHSAANDPVFVVLHSFTDAIFDEWMKRFSPPVDAWPQELAPIGHNRMYNMVPFFPPVTNEELFLTADQLGYSYAIDLPVSVEGTPDWTTTLSVVMGMLVVLVGLSALLLFLQYRRLRKGYTPLMETQLSHKRYTEEA</sequence>
<reference key="1">
    <citation type="journal article" date="2005" name="Anim. Genet.">
        <title>Sequences and mapping of genes encoding porcine tyrosinase (TYR) and tyrosinase-related proteins (TYRP1 and TYRP2).</title>
        <authorList>
            <person name="Okumura N."/>
            <person name="Hayashi T."/>
            <person name="Sekikawa H."/>
            <person name="Matsumoto T."/>
            <person name="Mikawa A."/>
            <person name="Hamasima N."/>
            <person name="Awata T."/>
        </authorList>
    </citation>
    <scope>NUCLEOTIDE SEQUENCE [MRNA]</scope>
    <source>
        <tissue>Skin</tissue>
    </source>
</reference>
<dbReference type="EC" id="5.3.3.12"/>
<dbReference type="EMBL" id="AB207241">
    <property type="protein sequence ID" value="BAD99582.1"/>
    <property type="molecule type" value="mRNA"/>
</dbReference>
<dbReference type="RefSeq" id="NP_001020398.1">
    <property type="nucleotide sequence ID" value="NM_001025227.1"/>
</dbReference>
<dbReference type="SMR" id="Q4R1H1"/>
<dbReference type="FunCoup" id="Q4R1H1">
    <property type="interactions" value="153"/>
</dbReference>
<dbReference type="STRING" id="9823.ENSSSCP00000010135"/>
<dbReference type="GlyCosmos" id="Q4R1H1">
    <property type="glycosylation" value="6 sites, No reported glycans"/>
</dbReference>
<dbReference type="GlyGen" id="Q4R1H1">
    <property type="glycosylation" value="6 sites"/>
</dbReference>
<dbReference type="PaxDb" id="9823-ENSSSCP00000010135"/>
<dbReference type="PeptideAtlas" id="Q4R1H1"/>
<dbReference type="Ensembl" id="ENSSSCT00000010405.5">
    <property type="protein sequence ID" value="ENSSSCP00000010135.2"/>
    <property type="gene ID" value="ENSSSCG00000009490.5"/>
</dbReference>
<dbReference type="Ensembl" id="ENSSSCT00085031738">
    <property type="protein sequence ID" value="ENSSSCP00085021980"/>
    <property type="gene ID" value="ENSSSCG00085016673"/>
</dbReference>
<dbReference type="Ensembl" id="ENSSSCT00105063627">
    <property type="protein sequence ID" value="ENSSSCP00105045240"/>
    <property type="gene ID" value="ENSSSCG00105033428"/>
</dbReference>
<dbReference type="Ensembl" id="ENSSSCT00110065009">
    <property type="protein sequence ID" value="ENSSSCP00110045651"/>
    <property type="gene ID" value="ENSSSCG00110034145"/>
</dbReference>
<dbReference type="Ensembl" id="ENSSSCT00115013455">
    <property type="protein sequence ID" value="ENSSSCP00115012713"/>
    <property type="gene ID" value="ENSSSCG00115007682"/>
</dbReference>
<dbReference type="Ensembl" id="ENSSSCT00130007614">
    <property type="protein sequence ID" value="ENSSSCP00130005014"/>
    <property type="gene ID" value="ENSSSCG00130004136"/>
</dbReference>
<dbReference type="GeneID" id="574066"/>
<dbReference type="KEGG" id="ssc:574066"/>
<dbReference type="CTD" id="1638"/>
<dbReference type="VGNC" id="VGNC:87192">
    <property type="gene designation" value="DCT"/>
</dbReference>
<dbReference type="eggNOG" id="ENOG502QRNA">
    <property type="taxonomic scope" value="Eukaryota"/>
</dbReference>
<dbReference type="GeneTree" id="ENSGT00940000156856"/>
<dbReference type="HOGENOM" id="CLU_038693_1_0_1"/>
<dbReference type="InParanoid" id="Q4R1H1"/>
<dbReference type="OMA" id="FFNRTCK"/>
<dbReference type="OrthoDB" id="6132182at2759"/>
<dbReference type="TreeFam" id="TF315865"/>
<dbReference type="Reactome" id="R-SSC-5662702">
    <property type="pathway name" value="Melanin biosynthesis"/>
</dbReference>
<dbReference type="UniPathway" id="UPA00785"/>
<dbReference type="Proteomes" id="UP000008227">
    <property type="component" value="Chromosome 11"/>
</dbReference>
<dbReference type="Proteomes" id="UP000314985">
    <property type="component" value="Unplaced"/>
</dbReference>
<dbReference type="Proteomes" id="UP000694570">
    <property type="component" value="Unplaced"/>
</dbReference>
<dbReference type="Proteomes" id="UP000694571">
    <property type="component" value="Unplaced"/>
</dbReference>
<dbReference type="Proteomes" id="UP000694720">
    <property type="component" value="Unplaced"/>
</dbReference>
<dbReference type="Proteomes" id="UP000694722">
    <property type="component" value="Unplaced"/>
</dbReference>
<dbReference type="Proteomes" id="UP000694723">
    <property type="component" value="Unplaced"/>
</dbReference>
<dbReference type="Proteomes" id="UP000694724">
    <property type="component" value="Unplaced"/>
</dbReference>
<dbReference type="Proteomes" id="UP000694725">
    <property type="component" value="Unplaced"/>
</dbReference>
<dbReference type="Proteomes" id="UP000694726">
    <property type="component" value="Unplaced"/>
</dbReference>
<dbReference type="Proteomes" id="UP000694727">
    <property type="component" value="Unplaced"/>
</dbReference>
<dbReference type="Proteomes" id="UP000694728">
    <property type="component" value="Unplaced"/>
</dbReference>
<dbReference type="Bgee" id="ENSSSCG00000009490">
    <property type="expression patterns" value="Expressed in oocyte and 28 other cell types or tissues"/>
</dbReference>
<dbReference type="ExpressionAtlas" id="Q4R1H1">
    <property type="expression patterns" value="baseline and differential"/>
</dbReference>
<dbReference type="GO" id="GO:0005829">
    <property type="term" value="C:cytosol"/>
    <property type="evidence" value="ECO:0000250"/>
    <property type="project" value="UniProtKB"/>
</dbReference>
<dbReference type="GO" id="GO:0042470">
    <property type="term" value="C:melanosome"/>
    <property type="evidence" value="ECO:0000250"/>
    <property type="project" value="UniProtKB"/>
</dbReference>
<dbReference type="GO" id="GO:0033162">
    <property type="term" value="C:melanosome membrane"/>
    <property type="evidence" value="ECO:0007669"/>
    <property type="project" value="UniProtKB-SubCell"/>
</dbReference>
<dbReference type="GO" id="GO:0005886">
    <property type="term" value="C:plasma membrane"/>
    <property type="evidence" value="ECO:0007669"/>
    <property type="project" value="Ensembl"/>
</dbReference>
<dbReference type="GO" id="GO:0004167">
    <property type="term" value="F:dopachrome isomerase activity"/>
    <property type="evidence" value="ECO:0000250"/>
    <property type="project" value="UniProtKB"/>
</dbReference>
<dbReference type="GO" id="GO:0046872">
    <property type="term" value="F:metal ion binding"/>
    <property type="evidence" value="ECO:0007669"/>
    <property type="project" value="UniProtKB-KW"/>
</dbReference>
<dbReference type="GO" id="GO:0016491">
    <property type="term" value="F:oxidoreductase activity"/>
    <property type="evidence" value="ECO:0007669"/>
    <property type="project" value="InterPro"/>
</dbReference>
<dbReference type="GO" id="GO:0048468">
    <property type="term" value="P:cell development"/>
    <property type="evidence" value="ECO:0007669"/>
    <property type="project" value="Ensembl"/>
</dbReference>
<dbReference type="GO" id="GO:0048066">
    <property type="term" value="P:developmental pigmentation"/>
    <property type="evidence" value="ECO:0000318"/>
    <property type="project" value="GO_Central"/>
</dbReference>
<dbReference type="GO" id="GO:0006583">
    <property type="term" value="P:melanin biosynthetic process from tyrosine"/>
    <property type="evidence" value="ECO:0000250"/>
    <property type="project" value="UniProtKB"/>
</dbReference>
<dbReference type="GO" id="GO:0002052">
    <property type="term" value="P:positive regulation of neuroblast proliferation"/>
    <property type="evidence" value="ECO:0000318"/>
    <property type="project" value="GO_Central"/>
</dbReference>
<dbReference type="GO" id="GO:0009637">
    <property type="term" value="P:response to blue light"/>
    <property type="evidence" value="ECO:0000250"/>
    <property type="project" value="UniProtKB"/>
</dbReference>
<dbReference type="GO" id="GO:0021847">
    <property type="term" value="P:ventricular zone neuroblast division"/>
    <property type="evidence" value="ECO:0000318"/>
    <property type="project" value="GO_Central"/>
</dbReference>
<dbReference type="FunFam" id="1.10.1280.10:FF:000002">
    <property type="entry name" value="L-dopachrome tautomerase"/>
    <property type="match status" value="1"/>
</dbReference>
<dbReference type="Gene3D" id="1.10.1280.10">
    <property type="entry name" value="Di-copper center containing domain from catechol oxidase"/>
    <property type="match status" value="1"/>
</dbReference>
<dbReference type="InterPro" id="IPR008922">
    <property type="entry name" value="Di-copper_centre_dom_sf"/>
</dbReference>
<dbReference type="InterPro" id="IPR050316">
    <property type="entry name" value="Tyrosinase/Hemocyanin"/>
</dbReference>
<dbReference type="InterPro" id="IPR002227">
    <property type="entry name" value="Tyrosinase_Cu-bd"/>
</dbReference>
<dbReference type="PANTHER" id="PTHR11474:SF4">
    <property type="entry name" value="L-DOPACHROME TAUTOMERASE"/>
    <property type="match status" value="1"/>
</dbReference>
<dbReference type="PANTHER" id="PTHR11474">
    <property type="entry name" value="TYROSINASE FAMILY MEMBER"/>
    <property type="match status" value="1"/>
</dbReference>
<dbReference type="Pfam" id="PF00264">
    <property type="entry name" value="Tyrosinase"/>
    <property type="match status" value="1"/>
</dbReference>
<dbReference type="PRINTS" id="PR00092">
    <property type="entry name" value="TYROSINASE"/>
</dbReference>
<dbReference type="SUPFAM" id="SSF48056">
    <property type="entry name" value="Di-copper centre-containing domain"/>
    <property type="match status" value="1"/>
</dbReference>
<dbReference type="PROSITE" id="PS00497">
    <property type="entry name" value="TYROSINASE_1"/>
    <property type="match status" value="1"/>
</dbReference>
<dbReference type="PROSITE" id="PS00498">
    <property type="entry name" value="TYROSINASE_2"/>
    <property type="match status" value="1"/>
</dbReference>
<name>TYRP2_PIG</name>
<protein>
    <recommendedName>
        <fullName>L-dopachrome tautomerase</fullName>
        <shortName>DCT</shortName>
        <shortName>DT</shortName>
        <ecNumber>5.3.3.12</ecNumber>
    </recommendedName>
    <alternativeName>
        <fullName>L-dopachrome Delta-isomerase</fullName>
    </alternativeName>
    <alternativeName>
        <fullName>Tyrosinase-related protein 2</fullName>
        <shortName>TRP-2</shortName>
        <shortName>TRP2</shortName>
    </alternativeName>
</protein>
<gene>
    <name type="primary">DCT</name>
    <name type="synonym">TYRP2</name>
</gene>
<comment type="function">
    <text evidence="3">Plays a role in melanin biosynthesis. Catalyzes the conversion of L-dopachrome into 5,6-dihydroxyindole-2-carboxylic acid (DHICA).</text>
</comment>
<comment type="catalytic activity">
    <reaction evidence="2">
        <text>L-dopachrome = 5,6-dihydroxyindole-2-carboxylate</text>
        <dbReference type="Rhea" id="RHEA:13041"/>
        <dbReference type="ChEBI" id="CHEBI:16875"/>
        <dbReference type="ChEBI" id="CHEBI:57509"/>
        <dbReference type="EC" id="5.3.3.12"/>
    </reaction>
</comment>
<comment type="cofactor">
    <cofactor evidence="2">
        <name>Zn(2+)</name>
        <dbReference type="ChEBI" id="CHEBI:29105"/>
    </cofactor>
    <text evidence="2">Binds 2 Zn(2+) ions per subunit.</text>
</comment>
<comment type="pathway">
    <text>Pigment biosynthesis; melanin biosynthesis.</text>
</comment>
<comment type="subunit">
    <text evidence="3">Forms an OPN3-dependent complex with TYR in response to blue light in melanocytes.</text>
</comment>
<comment type="subcellular location">
    <subcellularLocation>
        <location evidence="3">Melanosome membrane</location>
        <topology evidence="3">Single-pass type I membrane protein</topology>
    </subcellularLocation>
    <subcellularLocation>
        <location evidence="2">Melanosome</location>
    </subcellularLocation>
    <text evidence="2">Proper trafficking to melanosome is regulated by SGSM2, ANKRD27, RAB9A, RAB32 and RAB38.</text>
</comment>
<comment type="PTM">
    <text evidence="2">Glycosylated.</text>
</comment>
<comment type="similarity">
    <text evidence="5">Belongs to the tyrosinase family.</text>
</comment>
<feature type="signal peptide" evidence="4">
    <location>
        <begin position="1"/>
        <end position="23"/>
    </location>
</feature>
<feature type="chain" id="PRO_0000240477" description="L-dopachrome tautomerase">
    <location>
        <begin position="24"/>
        <end position="519"/>
    </location>
</feature>
<feature type="topological domain" description="Lumenal, melanosome" evidence="4">
    <location>
        <begin position="24"/>
        <end position="472"/>
    </location>
</feature>
<feature type="transmembrane region" description="Helical" evidence="4">
    <location>
        <begin position="473"/>
        <end position="493"/>
    </location>
</feature>
<feature type="topological domain" description="Cytoplasmic" evidence="4">
    <location>
        <begin position="494"/>
        <end position="519"/>
    </location>
</feature>
<feature type="binding site" evidence="1">
    <location>
        <position position="189"/>
    </location>
    <ligand>
        <name>Zn(2+)</name>
        <dbReference type="ChEBI" id="CHEBI:29105"/>
        <label>A</label>
    </ligand>
</feature>
<feature type="binding site" evidence="1">
    <location>
        <position position="211"/>
    </location>
    <ligand>
        <name>Zn(2+)</name>
        <dbReference type="ChEBI" id="CHEBI:29105"/>
        <label>A</label>
    </ligand>
</feature>
<feature type="binding site" evidence="1">
    <location>
        <position position="220"/>
    </location>
    <ligand>
        <name>Zn(2+)</name>
        <dbReference type="ChEBI" id="CHEBI:29105"/>
        <label>A</label>
    </ligand>
</feature>
<feature type="binding site" evidence="1">
    <location>
        <position position="369"/>
    </location>
    <ligand>
        <name>Zn(2+)</name>
        <dbReference type="ChEBI" id="CHEBI:29105"/>
        <label>B</label>
    </ligand>
</feature>
<feature type="binding site" evidence="1">
    <location>
        <position position="373"/>
    </location>
    <ligand>
        <name>Zn(2+)</name>
        <dbReference type="ChEBI" id="CHEBI:29105"/>
        <label>B</label>
    </ligand>
</feature>
<feature type="binding site" evidence="1">
    <location>
        <position position="396"/>
    </location>
    <ligand>
        <name>Zn(2+)</name>
        <dbReference type="ChEBI" id="CHEBI:29105"/>
        <label>B</label>
    </ligand>
</feature>
<feature type="glycosylation site" description="N-linked (GlcNAc...) asparagine" evidence="4">
    <location>
        <position position="170"/>
    </location>
</feature>
<feature type="glycosylation site" description="N-linked (GlcNAc...) asparagine" evidence="4">
    <location>
        <position position="178"/>
    </location>
</feature>
<feature type="glycosylation site" description="N-linked (GlcNAc...) asparagine" evidence="4">
    <location>
        <position position="237"/>
    </location>
</feature>
<feature type="glycosylation site" description="N-linked (GlcNAc...) asparagine" evidence="4">
    <location>
        <position position="300"/>
    </location>
</feature>
<feature type="glycosylation site" description="N-linked (GlcNAc...) asparagine" evidence="4">
    <location>
        <position position="342"/>
    </location>
</feature>
<feature type="glycosylation site" description="N-linked (GlcNAc...) asparagine" evidence="4">
    <location>
        <position position="377"/>
    </location>
</feature>
<proteinExistence type="evidence at transcript level"/>
<organism>
    <name type="scientific">Sus scrofa</name>
    <name type="common">Pig</name>
    <dbReference type="NCBI Taxonomy" id="9823"/>
    <lineage>
        <taxon>Eukaryota</taxon>
        <taxon>Metazoa</taxon>
        <taxon>Chordata</taxon>
        <taxon>Craniata</taxon>
        <taxon>Vertebrata</taxon>
        <taxon>Euteleostomi</taxon>
        <taxon>Mammalia</taxon>
        <taxon>Eutheria</taxon>
        <taxon>Laurasiatheria</taxon>
        <taxon>Artiodactyla</taxon>
        <taxon>Suina</taxon>
        <taxon>Suidae</taxon>
        <taxon>Sus</taxon>
    </lineage>
</organism>
<evidence type="ECO:0000250" key="1"/>
<evidence type="ECO:0000250" key="2">
    <source>
        <dbReference type="UniProtKB" id="P29812"/>
    </source>
</evidence>
<evidence type="ECO:0000250" key="3">
    <source>
        <dbReference type="UniProtKB" id="P40126"/>
    </source>
</evidence>
<evidence type="ECO:0000255" key="4"/>
<evidence type="ECO:0000305" key="5"/>
<accession>Q4R1H1</accession>